<dbReference type="EC" id="2.1.1.33" evidence="2"/>
<dbReference type="EMBL" id="CR931997">
    <property type="protein sequence ID" value="CAI36301.1"/>
    <property type="molecule type" value="Genomic_DNA"/>
</dbReference>
<dbReference type="RefSeq" id="WP_011272883.1">
    <property type="nucleotide sequence ID" value="NC_007164.1"/>
</dbReference>
<dbReference type="SMR" id="Q4JY06"/>
<dbReference type="STRING" id="306537.jk0149"/>
<dbReference type="KEGG" id="cjk:jk0149"/>
<dbReference type="PATRIC" id="fig|306537.10.peg.162"/>
<dbReference type="eggNOG" id="COG0220">
    <property type="taxonomic scope" value="Bacteria"/>
</dbReference>
<dbReference type="HOGENOM" id="CLU_050910_0_2_11"/>
<dbReference type="OrthoDB" id="9802090at2"/>
<dbReference type="UniPathway" id="UPA00989"/>
<dbReference type="Proteomes" id="UP000000545">
    <property type="component" value="Chromosome"/>
</dbReference>
<dbReference type="GO" id="GO:0043527">
    <property type="term" value="C:tRNA methyltransferase complex"/>
    <property type="evidence" value="ECO:0007669"/>
    <property type="project" value="TreeGrafter"/>
</dbReference>
<dbReference type="GO" id="GO:0008176">
    <property type="term" value="F:tRNA (guanine(46)-N7)-methyltransferase activity"/>
    <property type="evidence" value="ECO:0007669"/>
    <property type="project" value="UniProtKB-UniRule"/>
</dbReference>
<dbReference type="CDD" id="cd02440">
    <property type="entry name" value="AdoMet_MTases"/>
    <property type="match status" value="1"/>
</dbReference>
<dbReference type="Gene3D" id="3.40.50.150">
    <property type="entry name" value="Vaccinia Virus protein VP39"/>
    <property type="match status" value="1"/>
</dbReference>
<dbReference type="HAMAP" id="MF_01057">
    <property type="entry name" value="tRNA_methyltr_TrmB"/>
    <property type="match status" value="1"/>
</dbReference>
<dbReference type="InterPro" id="IPR029063">
    <property type="entry name" value="SAM-dependent_MTases_sf"/>
</dbReference>
<dbReference type="InterPro" id="IPR003358">
    <property type="entry name" value="tRNA_(Gua-N-7)_MeTrfase_Trmb"/>
</dbReference>
<dbReference type="InterPro" id="IPR055361">
    <property type="entry name" value="tRNA_methyltr_TrmB_bact"/>
</dbReference>
<dbReference type="NCBIfam" id="TIGR00091">
    <property type="entry name" value="tRNA (guanosine(46)-N7)-methyltransferase TrmB"/>
    <property type="match status" value="1"/>
</dbReference>
<dbReference type="PANTHER" id="PTHR23417">
    <property type="entry name" value="3-DEOXY-D-MANNO-OCTULOSONIC-ACID TRANSFERASE/TRNA GUANINE-N 7 - -METHYLTRANSFERASE"/>
    <property type="match status" value="1"/>
</dbReference>
<dbReference type="PANTHER" id="PTHR23417:SF14">
    <property type="entry name" value="PENTACOTRIPEPTIDE-REPEAT REGION OF PRORP DOMAIN-CONTAINING PROTEIN"/>
    <property type="match status" value="1"/>
</dbReference>
<dbReference type="Pfam" id="PF02390">
    <property type="entry name" value="Methyltransf_4"/>
    <property type="match status" value="1"/>
</dbReference>
<dbReference type="SUPFAM" id="SSF53335">
    <property type="entry name" value="S-adenosyl-L-methionine-dependent methyltransferases"/>
    <property type="match status" value="1"/>
</dbReference>
<dbReference type="PROSITE" id="PS51625">
    <property type="entry name" value="SAM_MT_TRMB"/>
    <property type="match status" value="1"/>
</dbReference>
<gene>
    <name evidence="2" type="primary">trmB</name>
    <name type="ordered locus">jk0149</name>
</gene>
<reference key="1">
    <citation type="journal article" date="2005" name="J. Bacteriol.">
        <title>Complete genome sequence and analysis of the multiresistant nosocomial pathogen Corynebacterium jeikeium K411, a lipid-requiring bacterium of the human skin flora.</title>
        <authorList>
            <person name="Tauch A."/>
            <person name="Kaiser O."/>
            <person name="Hain T."/>
            <person name="Goesmann A."/>
            <person name="Weisshaar B."/>
            <person name="Albersmeier A."/>
            <person name="Bekel T."/>
            <person name="Bischoff N."/>
            <person name="Brune I."/>
            <person name="Chakraborty T."/>
            <person name="Kalinowski J."/>
            <person name="Meyer F."/>
            <person name="Rupp O."/>
            <person name="Schneiker S."/>
            <person name="Viehoever P."/>
            <person name="Puehler A."/>
        </authorList>
    </citation>
    <scope>NUCLEOTIDE SEQUENCE [LARGE SCALE GENOMIC DNA]</scope>
    <source>
        <strain>K411</strain>
    </source>
</reference>
<accession>Q4JY06</accession>
<proteinExistence type="inferred from homology"/>
<feature type="chain" id="PRO_0000229162" description="tRNA (guanine-N(7)-)-methyltransferase">
    <location>
        <begin position="1"/>
        <end position="254"/>
    </location>
</feature>
<feature type="active site" evidence="1">
    <location>
        <position position="157"/>
    </location>
</feature>
<feature type="binding site" evidence="2">
    <location>
        <position position="82"/>
    </location>
    <ligand>
        <name>S-adenosyl-L-methionine</name>
        <dbReference type="ChEBI" id="CHEBI:59789"/>
    </ligand>
</feature>
<feature type="binding site" evidence="2">
    <location>
        <position position="107"/>
    </location>
    <ligand>
        <name>S-adenosyl-L-methionine</name>
        <dbReference type="ChEBI" id="CHEBI:59789"/>
    </ligand>
</feature>
<feature type="binding site" evidence="2">
    <location>
        <position position="134"/>
    </location>
    <ligand>
        <name>S-adenosyl-L-methionine</name>
        <dbReference type="ChEBI" id="CHEBI:59789"/>
    </ligand>
</feature>
<feature type="binding site" evidence="2">
    <location>
        <position position="157"/>
    </location>
    <ligand>
        <name>S-adenosyl-L-methionine</name>
        <dbReference type="ChEBI" id="CHEBI:59789"/>
    </ligand>
</feature>
<feature type="binding site" evidence="2">
    <location>
        <position position="161"/>
    </location>
    <ligand>
        <name>substrate</name>
    </ligand>
</feature>
<feature type="binding site" evidence="2">
    <location>
        <position position="193"/>
    </location>
    <ligand>
        <name>substrate</name>
    </ligand>
</feature>
<feature type="binding site" evidence="2">
    <location>
        <begin position="233"/>
        <end position="236"/>
    </location>
    <ligand>
        <name>substrate</name>
    </ligand>
</feature>
<keyword id="KW-0489">Methyltransferase</keyword>
<keyword id="KW-1185">Reference proteome</keyword>
<keyword id="KW-0949">S-adenosyl-L-methionine</keyword>
<keyword id="KW-0808">Transferase</keyword>
<keyword id="KW-0819">tRNA processing</keyword>
<name>TRMB_CORJK</name>
<comment type="function">
    <text evidence="2">Catalyzes the formation of N(7)-methylguanine at position 46 (m7G46) in tRNA.</text>
</comment>
<comment type="catalytic activity">
    <reaction evidence="2">
        <text>guanosine(46) in tRNA + S-adenosyl-L-methionine = N(7)-methylguanosine(46) in tRNA + S-adenosyl-L-homocysteine</text>
        <dbReference type="Rhea" id="RHEA:42708"/>
        <dbReference type="Rhea" id="RHEA-COMP:10188"/>
        <dbReference type="Rhea" id="RHEA-COMP:10189"/>
        <dbReference type="ChEBI" id="CHEBI:57856"/>
        <dbReference type="ChEBI" id="CHEBI:59789"/>
        <dbReference type="ChEBI" id="CHEBI:74269"/>
        <dbReference type="ChEBI" id="CHEBI:74480"/>
        <dbReference type="EC" id="2.1.1.33"/>
    </reaction>
</comment>
<comment type="pathway">
    <text evidence="2">tRNA modification; N(7)-methylguanine-tRNA biosynthesis.</text>
</comment>
<comment type="similarity">
    <text evidence="2">Belongs to the class I-like SAM-binding methyltransferase superfamily. TrmB family.</text>
</comment>
<organism>
    <name type="scientific">Corynebacterium jeikeium (strain K411)</name>
    <dbReference type="NCBI Taxonomy" id="306537"/>
    <lineage>
        <taxon>Bacteria</taxon>
        <taxon>Bacillati</taxon>
        <taxon>Actinomycetota</taxon>
        <taxon>Actinomycetes</taxon>
        <taxon>Mycobacteriales</taxon>
        <taxon>Corynebacteriaceae</taxon>
        <taxon>Corynebacterium</taxon>
    </lineage>
</organism>
<evidence type="ECO:0000250" key="1"/>
<evidence type="ECO:0000255" key="2">
    <source>
        <dbReference type="HAMAP-Rule" id="MF_01057"/>
    </source>
</evidence>
<protein>
    <recommendedName>
        <fullName evidence="2">tRNA (guanine-N(7)-)-methyltransferase</fullName>
        <ecNumber evidence="2">2.1.1.33</ecNumber>
    </recommendedName>
    <alternativeName>
        <fullName evidence="2">tRNA (guanine(46)-N(7))-methyltransferase</fullName>
    </alternativeName>
    <alternativeName>
        <fullName evidence="2">tRNA(m7G46)-methyltransferase</fullName>
    </alternativeName>
</protein>
<sequence length="254" mass="28941">MVWMNNSENTPGSLPPGRPLQTEFNDGRDYPRLGNFSFRRGTLTDNQEALWNEHWPKLGKVLADEVIDLPEWFDRDAETIAEIGSGTGTSTAAMAPLEAEKNIVAVELYRPGLAKLLGSVVRGDIHNVRMIRGDGVEVLQRMFAPESLSGVRIYFPDPWPKARHHKRRIVQSGTLHLIASRLKPGGILHIATDHADYAEWIDELVEVEEQLEYLGWPEDQSDIPQLTDRQVITKFEGKGLDKEHIIREYLWRKK</sequence>